<feature type="chain" id="PRO_0000369616" description="Ninja-family protein AFP3">
    <location>
        <begin position="1"/>
        <end position="231"/>
    </location>
</feature>
<feature type="region of interest" description="Disordered" evidence="2">
    <location>
        <begin position="83"/>
        <end position="152"/>
    </location>
</feature>
<feature type="compositionally biased region" description="Basic residues" evidence="2">
    <location>
        <begin position="83"/>
        <end position="96"/>
    </location>
</feature>
<feature type="compositionally biased region" description="Polar residues" evidence="2">
    <location>
        <begin position="130"/>
        <end position="152"/>
    </location>
</feature>
<protein>
    <recommendedName>
        <fullName>Ninja-family protein AFP3</fullName>
    </recommendedName>
    <alternativeName>
        <fullName>ABI five-binding protein 3</fullName>
        <shortName>ABI5-binding protein 3</shortName>
    </alternativeName>
</protein>
<gene>
    <name type="primary">AFP3</name>
    <name type="ordered locus">At3g29575</name>
    <name type="ORF">MWE13.5</name>
</gene>
<evidence type="ECO:0000250" key="1"/>
<evidence type="ECO:0000256" key="2">
    <source>
        <dbReference type="SAM" id="MobiDB-lite"/>
    </source>
</evidence>
<evidence type="ECO:0000269" key="3">
    <source>
    </source>
</evidence>
<evidence type="ECO:0000305" key="4"/>
<sequence>MSKKQRLSEEDGEVEIELDLGLSLNGRFGVDPLAKTRLMRSTSVLDLVVNDRSGLSRTCSLPVETEEEWRKRKELQSLRRLEAKRKRSEKQRKHKACGGEEKVVEEGSIGSSGSGSSGLSEVDTLLPPVQATTNKSVETSPSSAQSQPENLGKEASQNIIEDMPFVSTTGDGPNGKKINGFLYRYRKGEEVRIVCVCHGSFLSPAEFVKHAGGGDVAHPLKHIVVNPSPFL</sequence>
<name>AFP3_ARATH</name>
<keyword id="KW-0539">Nucleus</keyword>
<keyword id="KW-1185">Reference proteome</keyword>
<proteinExistence type="evidence at protein level"/>
<organism>
    <name type="scientific">Arabidopsis thaliana</name>
    <name type="common">Mouse-ear cress</name>
    <dbReference type="NCBI Taxonomy" id="3702"/>
    <lineage>
        <taxon>Eukaryota</taxon>
        <taxon>Viridiplantae</taxon>
        <taxon>Streptophyta</taxon>
        <taxon>Embryophyta</taxon>
        <taxon>Tracheophyta</taxon>
        <taxon>Spermatophyta</taxon>
        <taxon>Magnoliopsida</taxon>
        <taxon>eudicotyledons</taxon>
        <taxon>Gunneridae</taxon>
        <taxon>Pentapetalae</taxon>
        <taxon>rosids</taxon>
        <taxon>malvids</taxon>
        <taxon>Brassicales</taxon>
        <taxon>Brassicaceae</taxon>
        <taxon>Camelineae</taxon>
        <taxon>Arabidopsis</taxon>
    </lineage>
</organism>
<dbReference type="EMBL" id="AP002457">
    <property type="protein sequence ID" value="BAB01982.1"/>
    <property type="status" value="ALT_SEQ"/>
    <property type="molecule type" value="Genomic_DNA"/>
</dbReference>
<dbReference type="EMBL" id="CP002686">
    <property type="protein sequence ID" value="AEE77588.1"/>
    <property type="molecule type" value="Genomic_DNA"/>
</dbReference>
<dbReference type="EMBL" id="CP002686">
    <property type="protein sequence ID" value="AEE77589.1"/>
    <property type="molecule type" value="Genomic_DNA"/>
</dbReference>
<dbReference type="EMBL" id="CP002686">
    <property type="protein sequence ID" value="AEE77590.1"/>
    <property type="molecule type" value="Genomic_DNA"/>
</dbReference>
<dbReference type="EMBL" id="AF385741">
    <property type="protein sequence ID" value="AAK60331.1"/>
    <property type="molecule type" value="mRNA"/>
</dbReference>
<dbReference type="EMBL" id="AY133676">
    <property type="protein sequence ID" value="AAM91506.1"/>
    <property type="molecule type" value="mRNA"/>
</dbReference>
<dbReference type="EMBL" id="AK317411">
    <property type="protein sequence ID" value="BAH20080.1"/>
    <property type="molecule type" value="mRNA"/>
</dbReference>
<dbReference type="RefSeq" id="NP_001030794.1">
    <property type="nucleotide sequence ID" value="NM_001035717.2"/>
</dbReference>
<dbReference type="RefSeq" id="NP_001078222.1">
    <property type="nucleotide sequence ID" value="NM_001084753.2"/>
</dbReference>
<dbReference type="RefSeq" id="NP_189598.1">
    <property type="nucleotide sequence ID" value="NM_113878.5"/>
</dbReference>
<dbReference type="SMR" id="Q94F39"/>
<dbReference type="BioGRID" id="7947">
    <property type="interactions" value="4"/>
</dbReference>
<dbReference type="DIP" id="DIP-40552N"/>
<dbReference type="FunCoup" id="Q94F39">
    <property type="interactions" value="7"/>
</dbReference>
<dbReference type="IntAct" id="Q94F39">
    <property type="interactions" value="12"/>
</dbReference>
<dbReference type="STRING" id="3702.Q94F39"/>
<dbReference type="iPTMnet" id="Q94F39"/>
<dbReference type="PaxDb" id="3702-AT3G29575.1"/>
<dbReference type="ProteomicsDB" id="244767"/>
<dbReference type="EnsemblPlants" id="AT3G29575.1">
    <property type="protein sequence ID" value="AT3G29575.1"/>
    <property type="gene ID" value="AT3G29575"/>
</dbReference>
<dbReference type="EnsemblPlants" id="AT3G29575.3">
    <property type="protein sequence ID" value="AT3G29575.3"/>
    <property type="gene ID" value="AT3G29575"/>
</dbReference>
<dbReference type="EnsemblPlants" id="AT3G29575.4">
    <property type="protein sequence ID" value="AT3G29575.4"/>
    <property type="gene ID" value="AT3G29575"/>
</dbReference>
<dbReference type="GeneID" id="822619"/>
<dbReference type="Gramene" id="AT3G29575.1">
    <property type="protein sequence ID" value="AT3G29575.1"/>
    <property type="gene ID" value="AT3G29575"/>
</dbReference>
<dbReference type="Gramene" id="AT3G29575.3">
    <property type="protein sequence ID" value="AT3G29575.3"/>
    <property type="gene ID" value="AT3G29575"/>
</dbReference>
<dbReference type="Gramene" id="AT3G29575.4">
    <property type="protein sequence ID" value="AT3G29575.4"/>
    <property type="gene ID" value="AT3G29575"/>
</dbReference>
<dbReference type="KEGG" id="ath:AT3G29575"/>
<dbReference type="Araport" id="AT3G29575"/>
<dbReference type="TAIR" id="AT3G29575">
    <property type="gene designation" value="AFP3"/>
</dbReference>
<dbReference type="eggNOG" id="ENOG502QW6K">
    <property type="taxonomic scope" value="Eukaryota"/>
</dbReference>
<dbReference type="HOGENOM" id="CLU_034695_0_0_1"/>
<dbReference type="InParanoid" id="Q94F39"/>
<dbReference type="OMA" id="ERNCEDE"/>
<dbReference type="PhylomeDB" id="Q94F39"/>
<dbReference type="PRO" id="PR:Q94F39"/>
<dbReference type="Proteomes" id="UP000006548">
    <property type="component" value="Chromosome 3"/>
</dbReference>
<dbReference type="ExpressionAtlas" id="Q94F39">
    <property type="expression patterns" value="baseline and differential"/>
</dbReference>
<dbReference type="GO" id="GO:0005634">
    <property type="term" value="C:nucleus"/>
    <property type="evidence" value="ECO:0007669"/>
    <property type="project" value="UniProtKB-SubCell"/>
</dbReference>
<dbReference type="GO" id="GO:0007165">
    <property type="term" value="P:signal transduction"/>
    <property type="evidence" value="ECO:0007669"/>
    <property type="project" value="InterPro"/>
</dbReference>
<dbReference type="InterPro" id="IPR031307">
    <property type="entry name" value="Ninja_fam"/>
</dbReference>
<dbReference type="InterPro" id="IPR012463">
    <property type="entry name" value="Ninja_motif"/>
</dbReference>
<dbReference type="InterPro" id="IPR032310">
    <property type="entry name" value="NLS_NINJA_AFP-like"/>
</dbReference>
<dbReference type="InterPro" id="IPR032308">
    <property type="entry name" value="TDBD"/>
</dbReference>
<dbReference type="PANTHER" id="PTHR31413">
    <property type="entry name" value="AFP HOMOLOG 2"/>
    <property type="match status" value="1"/>
</dbReference>
<dbReference type="PANTHER" id="PTHR31413:SF31">
    <property type="entry name" value="NINJA-FAMILY PROTEIN AFP3"/>
    <property type="match status" value="1"/>
</dbReference>
<dbReference type="Pfam" id="PF07897">
    <property type="entry name" value="EAR"/>
    <property type="match status" value="1"/>
</dbReference>
<dbReference type="Pfam" id="PF16136">
    <property type="entry name" value="NLS_NINJA_AFP"/>
    <property type="match status" value="1"/>
</dbReference>
<dbReference type="Pfam" id="PF16135">
    <property type="entry name" value="TDBD"/>
    <property type="match status" value="1"/>
</dbReference>
<reference key="1">
    <citation type="submission" date="2000-06" db="EMBL/GenBank/DDBJ databases">
        <title>Structural analysis of Arabidopsis thaliana chromosome 3. III.</title>
        <authorList>
            <person name="Nakamura Y."/>
        </authorList>
    </citation>
    <scope>NUCLEOTIDE SEQUENCE [LARGE SCALE GENOMIC DNA]</scope>
    <source>
        <strain>cv. Columbia</strain>
    </source>
</reference>
<reference key="2">
    <citation type="journal article" date="2017" name="Plant J.">
        <title>Araport11: a complete reannotation of the Arabidopsis thaliana reference genome.</title>
        <authorList>
            <person name="Cheng C.Y."/>
            <person name="Krishnakumar V."/>
            <person name="Chan A.P."/>
            <person name="Thibaud-Nissen F."/>
            <person name="Schobel S."/>
            <person name="Town C.D."/>
        </authorList>
    </citation>
    <scope>GENOME REANNOTATION</scope>
    <source>
        <strain>cv. Columbia</strain>
    </source>
</reference>
<reference key="3">
    <citation type="journal article" date="2003" name="Science">
        <title>Empirical analysis of transcriptional activity in the Arabidopsis genome.</title>
        <authorList>
            <person name="Yamada K."/>
            <person name="Lim J."/>
            <person name="Dale J.M."/>
            <person name="Chen H."/>
            <person name="Shinn P."/>
            <person name="Palm C.J."/>
            <person name="Southwick A.M."/>
            <person name="Wu H.C."/>
            <person name="Kim C.J."/>
            <person name="Nguyen M."/>
            <person name="Pham P.K."/>
            <person name="Cheuk R.F."/>
            <person name="Karlin-Newmann G."/>
            <person name="Liu S.X."/>
            <person name="Lam B."/>
            <person name="Sakano H."/>
            <person name="Wu T."/>
            <person name="Yu G."/>
            <person name="Miranda M."/>
            <person name="Quach H.L."/>
            <person name="Tripp M."/>
            <person name="Chang C.H."/>
            <person name="Lee J.M."/>
            <person name="Toriumi M.J."/>
            <person name="Chan M.M."/>
            <person name="Tang C.C."/>
            <person name="Onodera C.S."/>
            <person name="Deng J.M."/>
            <person name="Akiyama K."/>
            <person name="Ansari Y."/>
            <person name="Arakawa T."/>
            <person name="Banh J."/>
            <person name="Banno F."/>
            <person name="Bowser L."/>
            <person name="Brooks S.Y."/>
            <person name="Carninci P."/>
            <person name="Chao Q."/>
            <person name="Choy N."/>
            <person name="Enju A."/>
            <person name="Goldsmith A.D."/>
            <person name="Gurjal M."/>
            <person name="Hansen N.F."/>
            <person name="Hayashizaki Y."/>
            <person name="Johnson-Hopson C."/>
            <person name="Hsuan V.W."/>
            <person name="Iida K."/>
            <person name="Karnes M."/>
            <person name="Khan S."/>
            <person name="Koesema E."/>
            <person name="Ishida J."/>
            <person name="Jiang P.X."/>
            <person name="Jones T."/>
            <person name="Kawai J."/>
            <person name="Kamiya A."/>
            <person name="Meyers C."/>
            <person name="Nakajima M."/>
            <person name="Narusaka M."/>
            <person name="Seki M."/>
            <person name="Sakurai T."/>
            <person name="Satou M."/>
            <person name="Tamse R."/>
            <person name="Vaysberg M."/>
            <person name="Wallender E.K."/>
            <person name="Wong C."/>
            <person name="Yamamura Y."/>
            <person name="Yuan S."/>
            <person name="Shinozaki K."/>
            <person name="Davis R.W."/>
            <person name="Theologis A."/>
            <person name="Ecker J.R."/>
        </authorList>
    </citation>
    <scope>NUCLEOTIDE SEQUENCE [LARGE SCALE MRNA]</scope>
    <source>
        <strain>cv. Columbia</strain>
    </source>
</reference>
<reference key="4">
    <citation type="journal article" date="2009" name="DNA Res.">
        <title>Analysis of multiple occurrences of alternative splicing events in Arabidopsis thaliana using novel sequenced full-length cDNAs.</title>
        <authorList>
            <person name="Iida K."/>
            <person name="Fukami-Kobayashi K."/>
            <person name="Toyoda A."/>
            <person name="Sakaki Y."/>
            <person name="Kobayashi M."/>
            <person name="Seki M."/>
            <person name="Shinozaki K."/>
        </authorList>
    </citation>
    <scope>NUCLEOTIDE SEQUENCE [LARGE SCALE MRNA]</scope>
    <source>
        <strain>cv. Columbia</strain>
    </source>
</reference>
<reference key="5">
    <citation type="journal article" date="2008" name="Plant Mol. Biol.">
        <title>A small plant-specific protein family of ABI five binding proteins (AFPs) regulates stress response in germinating Arabidopsis seeds and seedlings.</title>
        <authorList>
            <person name="Garcia M.E."/>
            <person name="Lynch T.J."/>
            <person name="Peeters J."/>
            <person name="Snowden C."/>
            <person name="Finkelstein R.R."/>
        </authorList>
    </citation>
    <scope>GENE FAMILY</scope>
    <scope>NOMENCLATURE</scope>
    <scope>SUBUNIT</scope>
    <scope>INTERACTION WITH ABI5/DPBF1; DPBF2; AREB3/DPBF3; EEL/DPBF4; ABF1; ABF3/DPBF5 AND ABF4/AREB2</scope>
    <scope>INDUCTION</scope>
    <scope>DISRUPTION PHENOTYPE</scope>
</reference>
<accession>Q94F39</accession>
<accession>Q9LH16</accession>
<comment type="function">
    <text evidence="1">Acts as a negative regulator of abscisic acid (ABA) response and stress responses.</text>
</comment>
<comment type="subunit">
    <text evidence="3">Forms a heterodimer with AFP2. Interacts with ABI5/DPBF1, DPBF2, AREB3/DPBF3, EEL/DPBF4, ABF1, ABF3/DPBF5 and ABF4/AREB2.</text>
</comment>
<comment type="subcellular location">
    <subcellularLocation>
        <location evidence="1">Nucleus</location>
    </subcellularLocation>
</comment>
<comment type="induction">
    <text evidence="3">Up-regulated by abscisic acid (ABA), glucose and salt.</text>
</comment>
<comment type="disruption phenotype">
    <text evidence="3">Exhibits hypersensitivity to salt and slight hypersensitivity to glucose abscisic acid (ABA).</text>
</comment>
<comment type="similarity">
    <text evidence="4">Belongs to the Ninja family.</text>
</comment>
<comment type="sequence caution" evidence="4">
    <conflict type="erroneous gene model prediction">
        <sequence resource="EMBL-CDS" id="BAB01982"/>
    </conflict>
</comment>